<keyword id="KW-1185">Reference proteome</keyword>
<keyword id="KW-0687">Ribonucleoprotein</keyword>
<keyword id="KW-0689">Ribosomal protein</keyword>
<keyword id="KW-0694">RNA-binding</keyword>
<keyword id="KW-0699">rRNA-binding</keyword>
<proteinExistence type="inferred from homology"/>
<feature type="chain" id="PRO_0000125178" description="Large ribosomal subunit protein uL22">
    <location>
        <begin position="1"/>
        <end position="129"/>
    </location>
</feature>
<feature type="sequence conflict" description="In Ref. 1; AAM08940." evidence="2" ref="1">
    <original>DK</original>
    <variation>R</variation>
    <location>
        <begin position="128"/>
        <end position="129"/>
    </location>
</feature>
<dbReference type="EMBL" id="AY083306">
    <property type="protein sequence ID" value="AAM08940.1"/>
    <property type="molecule type" value="Genomic_DNA"/>
</dbReference>
<dbReference type="EMBL" id="FP236530">
    <property type="protein sequence ID" value="CAX37428.1"/>
    <property type="molecule type" value="Genomic_DNA"/>
</dbReference>
<dbReference type="RefSeq" id="WP_012855569.1">
    <property type="nucleotide sequence ID" value="NC_013511.1"/>
</dbReference>
<dbReference type="SMR" id="Q8GM55"/>
<dbReference type="STRING" id="347256.MHO_2930"/>
<dbReference type="PaxDb" id="347256-MHO_2930"/>
<dbReference type="GeneID" id="89679317"/>
<dbReference type="KEGG" id="mho:MHO_2930"/>
<dbReference type="eggNOG" id="COG0091">
    <property type="taxonomic scope" value="Bacteria"/>
</dbReference>
<dbReference type="HOGENOM" id="CLU_083987_3_1_14"/>
<dbReference type="Proteomes" id="UP000002631">
    <property type="component" value="Chromosome"/>
</dbReference>
<dbReference type="GO" id="GO:0022625">
    <property type="term" value="C:cytosolic large ribosomal subunit"/>
    <property type="evidence" value="ECO:0007669"/>
    <property type="project" value="TreeGrafter"/>
</dbReference>
<dbReference type="GO" id="GO:0019843">
    <property type="term" value="F:rRNA binding"/>
    <property type="evidence" value="ECO:0007669"/>
    <property type="project" value="UniProtKB-UniRule"/>
</dbReference>
<dbReference type="GO" id="GO:0003735">
    <property type="term" value="F:structural constituent of ribosome"/>
    <property type="evidence" value="ECO:0007669"/>
    <property type="project" value="InterPro"/>
</dbReference>
<dbReference type="GO" id="GO:0006412">
    <property type="term" value="P:translation"/>
    <property type="evidence" value="ECO:0007669"/>
    <property type="project" value="UniProtKB-UniRule"/>
</dbReference>
<dbReference type="CDD" id="cd00336">
    <property type="entry name" value="Ribosomal_L22"/>
    <property type="match status" value="1"/>
</dbReference>
<dbReference type="Gene3D" id="3.90.470.10">
    <property type="entry name" value="Ribosomal protein L22/L17"/>
    <property type="match status" value="1"/>
</dbReference>
<dbReference type="HAMAP" id="MF_01331_B">
    <property type="entry name" value="Ribosomal_uL22_B"/>
    <property type="match status" value="1"/>
</dbReference>
<dbReference type="InterPro" id="IPR001063">
    <property type="entry name" value="Ribosomal_uL22"/>
</dbReference>
<dbReference type="InterPro" id="IPR005727">
    <property type="entry name" value="Ribosomal_uL22_bac/chlpt-type"/>
</dbReference>
<dbReference type="InterPro" id="IPR047867">
    <property type="entry name" value="Ribosomal_uL22_bac/org-type"/>
</dbReference>
<dbReference type="InterPro" id="IPR036394">
    <property type="entry name" value="Ribosomal_uL22_sf"/>
</dbReference>
<dbReference type="NCBIfam" id="TIGR01044">
    <property type="entry name" value="rplV_bact"/>
    <property type="match status" value="1"/>
</dbReference>
<dbReference type="PANTHER" id="PTHR13501">
    <property type="entry name" value="CHLOROPLAST 50S RIBOSOMAL PROTEIN L22-RELATED"/>
    <property type="match status" value="1"/>
</dbReference>
<dbReference type="PANTHER" id="PTHR13501:SF8">
    <property type="entry name" value="LARGE RIBOSOMAL SUBUNIT PROTEIN UL22M"/>
    <property type="match status" value="1"/>
</dbReference>
<dbReference type="Pfam" id="PF00237">
    <property type="entry name" value="Ribosomal_L22"/>
    <property type="match status" value="1"/>
</dbReference>
<dbReference type="SUPFAM" id="SSF54843">
    <property type="entry name" value="Ribosomal protein L22"/>
    <property type="match status" value="1"/>
</dbReference>
<protein>
    <recommendedName>
        <fullName evidence="1">Large ribosomal subunit protein uL22</fullName>
    </recommendedName>
    <alternativeName>
        <fullName evidence="2">50S ribosomal protein L22</fullName>
    </alternativeName>
</protein>
<accession>Q8GM55</accession>
<accession>D1J881</accession>
<evidence type="ECO:0000255" key="1">
    <source>
        <dbReference type="HAMAP-Rule" id="MF_01331"/>
    </source>
</evidence>
<evidence type="ECO:0000305" key="2"/>
<organism>
    <name type="scientific">Metamycoplasma hominis (strain ATCC 23114 / DSM 25592 / NBRC 14850 / NCTC 10111 / PG21)</name>
    <name type="common">Mycoplasma hominis</name>
    <dbReference type="NCBI Taxonomy" id="347256"/>
    <lineage>
        <taxon>Bacteria</taxon>
        <taxon>Bacillati</taxon>
        <taxon>Mycoplasmatota</taxon>
        <taxon>Mycoplasmoidales</taxon>
        <taxon>Metamycoplasmataceae</taxon>
        <taxon>Metamycoplasma</taxon>
    </lineage>
</organism>
<name>RL22_METH1</name>
<sequence length="129" mass="14473">MAKEILQNSAHASVRMQRISPRKARLVADLIRYKSATQAIVILKHTHKKASEIILKLLNSAIANATNNAGLDATKLYVTTILVNDGPTLKRFQPHSRGRAYAILKRTSHFFIELTEINNVEEINKKGDK</sequence>
<gene>
    <name evidence="1" type="primary">rplV</name>
    <name type="ordered locus">MHO_2930</name>
</gene>
<comment type="function">
    <text evidence="1">This protein binds specifically to 23S rRNA; its binding is stimulated by other ribosomal proteins, e.g. L4, L17, and L20. It is important during the early stages of 50S assembly. It makes multiple contacts with different domains of the 23S rRNA in the assembled 50S subunit and ribosome (By similarity).</text>
</comment>
<comment type="function">
    <text evidence="1">The globular domain of the protein is located near the polypeptide exit tunnel on the outside of the subunit, while an extended beta-hairpin is found that lines the wall of the exit tunnel in the center of the 70S ribosome.</text>
</comment>
<comment type="subunit">
    <text evidence="1">Part of the 50S ribosomal subunit.</text>
</comment>
<comment type="similarity">
    <text evidence="1">Belongs to the universal ribosomal protein uL22 family.</text>
</comment>
<reference key="1">
    <citation type="journal article" date="2002" name="Antimicrob. Agents Chemother.">
        <title>Mutations in 23S rRNA account for intrinsic resistance to macrolides in Mycoplasma hominis and Mycoplasma fermentans and for acquired resistance to macrolides in M. hominis.</title>
        <authorList>
            <person name="Pereyre S."/>
            <person name="Gonzalez P."/>
            <person name="De Barbeyrac B."/>
            <person name="Darnige A."/>
            <person name="Renaudin H."/>
            <person name="Charron A."/>
            <person name="Raherison S."/>
            <person name="Bebear C."/>
            <person name="Bebear C.M."/>
        </authorList>
    </citation>
    <scope>NUCLEOTIDE SEQUENCE [GENOMIC DNA]</scope>
</reference>
<reference key="2">
    <citation type="journal article" date="2009" name="PLoS Genet.">
        <title>Life on arginine for Mycoplasma hominis: clues from its minimal genome and comparison with other human urogenital mycoplasmas.</title>
        <authorList>
            <person name="Pereyre S."/>
            <person name="Sirand-Pugnet P."/>
            <person name="Beven L."/>
            <person name="Charron A."/>
            <person name="Renaudin H."/>
            <person name="Barre A."/>
            <person name="Avenaud P."/>
            <person name="Jacob D."/>
            <person name="Couloux A."/>
            <person name="Barbe V."/>
            <person name="de Daruvar A."/>
            <person name="Blanchard A."/>
            <person name="Bebear C."/>
        </authorList>
    </citation>
    <scope>NUCLEOTIDE SEQUENCE [LARGE SCALE GENOMIC DNA]</scope>
    <source>
        <strain>ATCC 23114 / DSM 25592 / NBRC 14850 / NCTC 10111 / PG21</strain>
    </source>
</reference>